<gene>
    <name evidence="1" type="primary">rimO</name>
    <name type="ordered locus">Ppro_3094</name>
</gene>
<comment type="function">
    <text evidence="1">Catalyzes the methylthiolation of an aspartic acid residue of ribosomal protein uS12.</text>
</comment>
<comment type="catalytic activity">
    <reaction evidence="1">
        <text>L-aspartate(89)-[ribosomal protein uS12]-hydrogen + (sulfur carrier)-SH + AH2 + 2 S-adenosyl-L-methionine = 3-methylsulfanyl-L-aspartate(89)-[ribosomal protein uS12]-hydrogen + (sulfur carrier)-H + 5'-deoxyadenosine + L-methionine + A + S-adenosyl-L-homocysteine + 2 H(+)</text>
        <dbReference type="Rhea" id="RHEA:37087"/>
        <dbReference type="Rhea" id="RHEA-COMP:10460"/>
        <dbReference type="Rhea" id="RHEA-COMP:10461"/>
        <dbReference type="Rhea" id="RHEA-COMP:14737"/>
        <dbReference type="Rhea" id="RHEA-COMP:14739"/>
        <dbReference type="ChEBI" id="CHEBI:13193"/>
        <dbReference type="ChEBI" id="CHEBI:15378"/>
        <dbReference type="ChEBI" id="CHEBI:17319"/>
        <dbReference type="ChEBI" id="CHEBI:17499"/>
        <dbReference type="ChEBI" id="CHEBI:29917"/>
        <dbReference type="ChEBI" id="CHEBI:29961"/>
        <dbReference type="ChEBI" id="CHEBI:57844"/>
        <dbReference type="ChEBI" id="CHEBI:57856"/>
        <dbReference type="ChEBI" id="CHEBI:59789"/>
        <dbReference type="ChEBI" id="CHEBI:64428"/>
        <dbReference type="ChEBI" id="CHEBI:73599"/>
        <dbReference type="EC" id="2.8.4.4"/>
    </reaction>
</comment>
<comment type="cofactor">
    <cofactor evidence="1">
        <name>[4Fe-4S] cluster</name>
        <dbReference type="ChEBI" id="CHEBI:49883"/>
    </cofactor>
    <text evidence="1">Binds 2 [4Fe-4S] clusters. One cluster is coordinated with 3 cysteines and an exchangeable S-adenosyl-L-methionine.</text>
</comment>
<comment type="subcellular location">
    <subcellularLocation>
        <location evidence="1">Cytoplasm</location>
    </subcellularLocation>
</comment>
<comment type="similarity">
    <text evidence="1">Belongs to the methylthiotransferase family. RimO subfamily.</text>
</comment>
<name>RIMO_PELPD</name>
<proteinExistence type="inferred from homology"/>
<keyword id="KW-0004">4Fe-4S</keyword>
<keyword id="KW-0963">Cytoplasm</keyword>
<keyword id="KW-0408">Iron</keyword>
<keyword id="KW-0411">Iron-sulfur</keyword>
<keyword id="KW-0479">Metal-binding</keyword>
<keyword id="KW-1185">Reference proteome</keyword>
<keyword id="KW-0949">S-adenosyl-L-methionine</keyword>
<keyword id="KW-0808">Transferase</keyword>
<dbReference type="EC" id="2.8.4.4" evidence="1"/>
<dbReference type="EMBL" id="CP000482">
    <property type="protein sequence ID" value="ABL00690.1"/>
    <property type="molecule type" value="Genomic_DNA"/>
</dbReference>
<dbReference type="SMR" id="A1ATL9"/>
<dbReference type="STRING" id="338966.Ppro_3094"/>
<dbReference type="KEGG" id="ppd:Ppro_3094"/>
<dbReference type="eggNOG" id="COG0621">
    <property type="taxonomic scope" value="Bacteria"/>
</dbReference>
<dbReference type="HOGENOM" id="CLU_018697_0_1_7"/>
<dbReference type="Proteomes" id="UP000006732">
    <property type="component" value="Chromosome"/>
</dbReference>
<dbReference type="GO" id="GO:0005829">
    <property type="term" value="C:cytosol"/>
    <property type="evidence" value="ECO:0007669"/>
    <property type="project" value="TreeGrafter"/>
</dbReference>
<dbReference type="GO" id="GO:0051539">
    <property type="term" value="F:4 iron, 4 sulfur cluster binding"/>
    <property type="evidence" value="ECO:0007669"/>
    <property type="project" value="UniProtKB-UniRule"/>
</dbReference>
<dbReference type="GO" id="GO:0035599">
    <property type="term" value="F:aspartic acid methylthiotransferase activity"/>
    <property type="evidence" value="ECO:0007669"/>
    <property type="project" value="TreeGrafter"/>
</dbReference>
<dbReference type="GO" id="GO:0046872">
    <property type="term" value="F:metal ion binding"/>
    <property type="evidence" value="ECO:0007669"/>
    <property type="project" value="UniProtKB-KW"/>
</dbReference>
<dbReference type="GO" id="GO:0103039">
    <property type="term" value="F:protein methylthiotransferase activity"/>
    <property type="evidence" value="ECO:0007669"/>
    <property type="project" value="UniProtKB-EC"/>
</dbReference>
<dbReference type="GO" id="GO:0006400">
    <property type="term" value="P:tRNA modification"/>
    <property type="evidence" value="ECO:0007669"/>
    <property type="project" value="InterPro"/>
</dbReference>
<dbReference type="CDD" id="cd01335">
    <property type="entry name" value="Radical_SAM"/>
    <property type="match status" value="1"/>
</dbReference>
<dbReference type="FunFam" id="3.80.30.20:FF:000001">
    <property type="entry name" value="tRNA-2-methylthio-N(6)-dimethylallyladenosine synthase 2"/>
    <property type="match status" value="1"/>
</dbReference>
<dbReference type="Gene3D" id="3.40.50.12160">
    <property type="entry name" value="Methylthiotransferase, N-terminal domain"/>
    <property type="match status" value="1"/>
</dbReference>
<dbReference type="Gene3D" id="2.40.50.140">
    <property type="entry name" value="Nucleic acid-binding proteins"/>
    <property type="match status" value="1"/>
</dbReference>
<dbReference type="Gene3D" id="3.80.30.20">
    <property type="entry name" value="tm_1862 like domain"/>
    <property type="match status" value="1"/>
</dbReference>
<dbReference type="HAMAP" id="MF_01865">
    <property type="entry name" value="MTTase_RimO"/>
    <property type="match status" value="1"/>
</dbReference>
<dbReference type="InterPro" id="IPR006638">
    <property type="entry name" value="Elp3/MiaA/NifB-like_rSAM"/>
</dbReference>
<dbReference type="InterPro" id="IPR005839">
    <property type="entry name" value="Methylthiotransferase"/>
</dbReference>
<dbReference type="InterPro" id="IPR020612">
    <property type="entry name" value="Methylthiotransferase_CS"/>
</dbReference>
<dbReference type="InterPro" id="IPR013848">
    <property type="entry name" value="Methylthiotransferase_N"/>
</dbReference>
<dbReference type="InterPro" id="IPR038135">
    <property type="entry name" value="Methylthiotransferase_N_sf"/>
</dbReference>
<dbReference type="InterPro" id="IPR012340">
    <property type="entry name" value="NA-bd_OB-fold"/>
</dbReference>
<dbReference type="InterPro" id="IPR005840">
    <property type="entry name" value="Ribosomal_uS12_MeSTrfase_RimO"/>
</dbReference>
<dbReference type="InterPro" id="IPR007197">
    <property type="entry name" value="rSAM"/>
</dbReference>
<dbReference type="InterPro" id="IPR023404">
    <property type="entry name" value="rSAM_horseshoe"/>
</dbReference>
<dbReference type="InterPro" id="IPR002792">
    <property type="entry name" value="TRAM_dom"/>
</dbReference>
<dbReference type="NCBIfam" id="TIGR01125">
    <property type="entry name" value="30S ribosomal protein S12 methylthiotransferase RimO"/>
    <property type="match status" value="1"/>
</dbReference>
<dbReference type="NCBIfam" id="TIGR00089">
    <property type="entry name" value="MiaB/RimO family radical SAM methylthiotransferase"/>
    <property type="match status" value="1"/>
</dbReference>
<dbReference type="PANTHER" id="PTHR43837">
    <property type="entry name" value="RIBOSOMAL PROTEIN S12 METHYLTHIOTRANSFERASE RIMO"/>
    <property type="match status" value="1"/>
</dbReference>
<dbReference type="PANTHER" id="PTHR43837:SF1">
    <property type="entry name" value="RIBOSOMAL PROTEIN US12 METHYLTHIOTRANSFERASE RIMO"/>
    <property type="match status" value="1"/>
</dbReference>
<dbReference type="Pfam" id="PF04055">
    <property type="entry name" value="Radical_SAM"/>
    <property type="match status" value="1"/>
</dbReference>
<dbReference type="Pfam" id="PF18693">
    <property type="entry name" value="TRAM_2"/>
    <property type="match status" value="1"/>
</dbReference>
<dbReference type="Pfam" id="PF00919">
    <property type="entry name" value="UPF0004"/>
    <property type="match status" value="1"/>
</dbReference>
<dbReference type="SFLD" id="SFLDG01082">
    <property type="entry name" value="B12-binding_domain_containing"/>
    <property type="match status" value="1"/>
</dbReference>
<dbReference type="SFLD" id="SFLDG01061">
    <property type="entry name" value="methylthiotransferase"/>
    <property type="match status" value="1"/>
</dbReference>
<dbReference type="SFLD" id="SFLDF00274">
    <property type="entry name" value="ribosomal_protein_S12_methylth"/>
    <property type="match status" value="1"/>
</dbReference>
<dbReference type="SMART" id="SM00729">
    <property type="entry name" value="Elp3"/>
    <property type="match status" value="1"/>
</dbReference>
<dbReference type="SUPFAM" id="SSF102114">
    <property type="entry name" value="Radical SAM enzymes"/>
    <property type="match status" value="1"/>
</dbReference>
<dbReference type="PROSITE" id="PS51449">
    <property type="entry name" value="MTTASE_N"/>
    <property type="match status" value="1"/>
</dbReference>
<dbReference type="PROSITE" id="PS01278">
    <property type="entry name" value="MTTASE_RADICAL"/>
    <property type="match status" value="1"/>
</dbReference>
<dbReference type="PROSITE" id="PS51918">
    <property type="entry name" value="RADICAL_SAM"/>
    <property type="match status" value="1"/>
</dbReference>
<dbReference type="PROSITE" id="PS50926">
    <property type="entry name" value="TRAM"/>
    <property type="match status" value="1"/>
</dbReference>
<evidence type="ECO:0000255" key="1">
    <source>
        <dbReference type="HAMAP-Rule" id="MF_01865"/>
    </source>
</evidence>
<evidence type="ECO:0000255" key="2">
    <source>
        <dbReference type="PROSITE-ProRule" id="PRU01266"/>
    </source>
</evidence>
<accession>A1ATL9</accession>
<reference key="1">
    <citation type="submission" date="2006-10" db="EMBL/GenBank/DDBJ databases">
        <title>Complete sequence of chromosome of Pelobacter propionicus DSM 2379.</title>
        <authorList>
            <consortium name="US DOE Joint Genome Institute"/>
            <person name="Copeland A."/>
            <person name="Lucas S."/>
            <person name="Lapidus A."/>
            <person name="Barry K."/>
            <person name="Detter J.C."/>
            <person name="Glavina del Rio T."/>
            <person name="Hammon N."/>
            <person name="Israni S."/>
            <person name="Dalin E."/>
            <person name="Tice H."/>
            <person name="Pitluck S."/>
            <person name="Saunders E."/>
            <person name="Brettin T."/>
            <person name="Bruce D."/>
            <person name="Han C."/>
            <person name="Tapia R."/>
            <person name="Schmutz J."/>
            <person name="Larimer F."/>
            <person name="Land M."/>
            <person name="Hauser L."/>
            <person name="Kyrpides N."/>
            <person name="Kim E."/>
            <person name="Lovley D."/>
            <person name="Richardson P."/>
        </authorList>
    </citation>
    <scope>NUCLEOTIDE SEQUENCE [LARGE SCALE GENOMIC DNA]</scope>
    <source>
        <strain>DSM 2379 / NBRC 103807 / OttBd1</strain>
    </source>
</reference>
<sequence length="450" mass="51087">MESTEKQKVSMVSLGCSKNLVDAEVMLGLLARQEYEITTDEREADIIIVNTCSFIKEAKQESIDAILDLAERKNDGRCHTLIVSGCLPQRYQEELARELPEVDIFIGTGDYPRIAEILAEKSGTDEQLCYIGDPDFVFDETLPRLNSSPAWFSYLKIGEGCSNRCSYCIIPKLRGPYRSRPLEALVAEAEQLASRGVKELNIISQDITRYGSDMEDGTTLETLLRRLVQIDGIQWIRLLYAYPDGISDALIALIRDEPKICKYLDIPLQHISDPVLKLMRRRSNEQQIRELLAKLRREIPTLALRTSLIVGFPGETMEDFTSLMQFVEQARFDRLGVFCYSREEGTPAATMPDQVSERVKRERHRKLMRIQARLSFKRNRELIGTTEQVIVEGYSEETELLLKGRSSRQAPDIDGQVYITAGTADVGDIVALRITDSSDYDLIGEIQERT</sequence>
<organism>
    <name type="scientific">Pelobacter propionicus (strain DSM 2379 / NBRC 103807 / OttBd1)</name>
    <dbReference type="NCBI Taxonomy" id="338966"/>
    <lineage>
        <taxon>Bacteria</taxon>
        <taxon>Pseudomonadati</taxon>
        <taxon>Thermodesulfobacteriota</taxon>
        <taxon>Desulfuromonadia</taxon>
        <taxon>Desulfuromonadales</taxon>
        <taxon>Desulfuromonadaceae</taxon>
        <taxon>Pelobacter</taxon>
    </lineage>
</organism>
<protein>
    <recommendedName>
        <fullName evidence="1">Ribosomal protein uS12 methylthiotransferase RimO</fullName>
        <shortName evidence="1">uS12 MTTase</shortName>
        <shortName evidence="1">uS12 methylthiotransferase</shortName>
        <ecNumber evidence="1">2.8.4.4</ecNumber>
    </recommendedName>
    <alternativeName>
        <fullName evidence="1">Ribosomal protein uS12 (aspartate-C(3))-methylthiotransferase</fullName>
    </alternativeName>
    <alternativeName>
        <fullName evidence="1">Ribosome maturation factor RimO</fullName>
    </alternativeName>
</protein>
<feature type="chain" id="PRO_0000374914" description="Ribosomal protein uS12 methylthiotransferase RimO">
    <location>
        <begin position="1"/>
        <end position="450"/>
    </location>
</feature>
<feature type="domain" description="MTTase N-terminal" evidence="1">
    <location>
        <begin position="7"/>
        <end position="123"/>
    </location>
</feature>
<feature type="domain" description="Radical SAM core" evidence="2">
    <location>
        <begin position="147"/>
        <end position="377"/>
    </location>
</feature>
<feature type="domain" description="TRAM" evidence="1">
    <location>
        <begin position="380"/>
        <end position="448"/>
    </location>
</feature>
<feature type="binding site" evidence="1">
    <location>
        <position position="16"/>
    </location>
    <ligand>
        <name>[4Fe-4S] cluster</name>
        <dbReference type="ChEBI" id="CHEBI:49883"/>
        <label>1</label>
    </ligand>
</feature>
<feature type="binding site" evidence="1">
    <location>
        <position position="52"/>
    </location>
    <ligand>
        <name>[4Fe-4S] cluster</name>
        <dbReference type="ChEBI" id="CHEBI:49883"/>
        <label>1</label>
    </ligand>
</feature>
<feature type="binding site" evidence="1">
    <location>
        <position position="86"/>
    </location>
    <ligand>
        <name>[4Fe-4S] cluster</name>
        <dbReference type="ChEBI" id="CHEBI:49883"/>
        <label>1</label>
    </ligand>
</feature>
<feature type="binding site" evidence="1">
    <location>
        <position position="161"/>
    </location>
    <ligand>
        <name>[4Fe-4S] cluster</name>
        <dbReference type="ChEBI" id="CHEBI:49883"/>
        <label>2</label>
        <note>4Fe-4S-S-AdoMet</note>
    </ligand>
</feature>
<feature type="binding site" evidence="1">
    <location>
        <position position="165"/>
    </location>
    <ligand>
        <name>[4Fe-4S] cluster</name>
        <dbReference type="ChEBI" id="CHEBI:49883"/>
        <label>2</label>
        <note>4Fe-4S-S-AdoMet</note>
    </ligand>
</feature>
<feature type="binding site" evidence="1">
    <location>
        <position position="168"/>
    </location>
    <ligand>
        <name>[4Fe-4S] cluster</name>
        <dbReference type="ChEBI" id="CHEBI:49883"/>
        <label>2</label>
        <note>4Fe-4S-S-AdoMet</note>
    </ligand>
</feature>